<feature type="chain" id="PRO_0000351834" description="Protein-L-isoaspartate O-methyltransferase">
    <location>
        <begin position="1"/>
        <end position="322"/>
    </location>
</feature>
<feature type="region of interest" description="Disordered" evidence="2">
    <location>
        <begin position="1"/>
        <end position="101"/>
    </location>
</feature>
<feature type="compositionally biased region" description="Basic and acidic residues" evidence="2">
    <location>
        <begin position="14"/>
        <end position="29"/>
    </location>
</feature>
<feature type="compositionally biased region" description="Low complexity" evidence="2">
    <location>
        <begin position="33"/>
        <end position="51"/>
    </location>
</feature>
<feature type="compositionally biased region" description="Low complexity" evidence="2">
    <location>
        <begin position="76"/>
        <end position="91"/>
    </location>
</feature>
<feature type="active site" evidence="1">
    <location>
        <position position="170"/>
    </location>
</feature>
<accession>Q63UU3</accession>
<dbReference type="EC" id="2.1.1.77" evidence="1"/>
<dbReference type="EMBL" id="BX571965">
    <property type="protein sequence ID" value="CAH35504.1"/>
    <property type="molecule type" value="Genomic_DNA"/>
</dbReference>
<dbReference type="RefSeq" id="WP_004531391.1">
    <property type="nucleotide sequence ID" value="NZ_CP009538.1"/>
</dbReference>
<dbReference type="RefSeq" id="YP_108123.1">
    <property type="nucleotide sequence ID" value="NC_006350.1"/>
</dbReference>
<dbReference type="SMR" id="Q63UU3"/>
<dbReference type="STRING" id="272560.BPSL1503"/>
<dbReference type="KEGG" id="bps:BPSL1503"/>
<dbReference type="PATRIC" id="fig|272560.51.peg.3539"/>
<dbReference type="eggNOG" id="COG2518">
    <property type="taxonomic scope" value="Bacteria"/>
</dbReference>
<dbReference type="Proteomes" id="UP000000605">
    <property type="component" value="Chromosome 1"/>
</dbReference>
<dbReference type="GO" id="GO:0005737">
    <property type="term" value="C:cytoplasm"/>
    <property type="evidence" value="ECO:0007669"/>
    <property type="project" value="UniProtKB-SubCell"/>
</dbReference>
<dbReference type="GO" id="GO:0004719">
    <property type="term" value="F:protein-L-isoaspartate (D-aspartate) O-methyltransferase activity"/>
    <property type="evidence" value="ECO:0007669"/>
    <property type="project" value="UniProtKB-UniRule"/>
</dbReference>
<dbReference type="GO" id="GO:0032259">
    <property type="term" value="P:methylation"/>
    <property type="evidence" value="ECO:0007669"/>
    <property type="project" value="UniProtKB-KW"/>
</dbReference>
<dbReference type="GO" id="GO:0036211">
    <property type="term" value="P:protein modification process"/>
    <property type="evidence" value="ECO:0007669"/>
    <property type="project" value="UniProtKB-UniRule"/>
</dbReference>
<dbReference type="GO" id="GO:0030091">
    <property type="term" value="P:protein repair"/>
    <property type="evidence" value="ECO:0007669"/>
    <property type="project" value="UniProtKB-UniRule"/>
</dbReference>
<dbReference type="CDD" id="cd02440">
    <property type="entry name" value="AdoMet_MTases"/>
    <property type="match status" value="1"/>
</dbReference>
<dbReference type="FunFam" id="3.40.50.150:FF:000010">
    <property type="entry name" value="Protein-L-isoaspartate O-methyltransferase"/>
    <property type="match status" value="1"/>
</dbReference>
<dbReference type="Gene3D" id="3.40.50.150">
    <property type="entry name" value="Vaccinia Virus protein VP39"/>
    <property type="match status" value="1"/>
</dbReference>
<dbReference type="HAMAP" id="MF_00090">
    <property type="entry name" value="PIMT"/>
    <property type="match status" value="1"/>
</dbReference>
<dbReference type="InterPro" id="IPR000682">
    <property type="entry name" value="PCMT"/>
</dbReference>
<dbReference type="InterPro" id="IPR029063">
    <property type="entry name" value="SAM-dependent_MTases_sf"/>
</dbReference>
<dbReference type="NCBIfam" id="TIGR00080">
    <property type="entry name" value="pimt"/>
    <property type="match status" value="1"/>
</dbReference>
<dbReference type="NCBIfam" id="NF001453">
    <property type="entry name" value="PRK00312.1"/>
    <property type="match status" value="1"/>
</dbReference>
<dbReference type="PANTHER" id="PTHR11579">
    <property type="entry name" value="PROTEIN-L-ISOASPARTATE O-METHYLTRANSFERASE"/>
    <property type="match status" value="1"/>
</dbReference>
<dbReference type="PANTHER" id="PTHR11579:SF0">
    <property type="entry name" value="PROTEIN-L-ISOASPARTATE(D-ASPARTATE) O-METHYLTRANSFERASE"/>
    <property type="match status" value="1"/>
</dbReference>
<dbReference type="Pfam" id="PF01135">
    <property type="entry name" value="PCMT"/>
    <property type="match status" value="1"/>
</dbReference>
<dbReference type="SUPFAM" id="SSF53335">
    <property type="entry name" value="S-adenosyl-L-methionine-dependent methyltransferases"/>
    <property type="match status" value="1"/>
</dbReference>
<dbReference type="PROSITE" id="PS01279">
    <property type="entry name" value="PCMT"/>
    <property type="match status" value="1"/>
</dbReference>
<comment type="function">
    <text evidence="1">Catalyzes the methyl esterification of L-isoaspartyl residues in peptides and proteins that result from spontaneous decomposition of normal L-aspartyl and L-asparaginyl residues. It plays a role in the repair and/or degradation of damaged proteins.</text>
</comment>
<comment type="catalytic activity">
    <reaction evidence="1">
        <text>[protein]-L-isoaspartate + S-adenosyl-L-methionine = [protein]-L-isoaspartate alpha-methyl ester + S-adenosyl-L-homocysteine</text>
        <dbReference type="Rhea" id="RHEA:12705"/>
        <dbReference type="Rhea" id="RHEA-COMP:12143"/>
        <dbReference type="Rhea" id="RHEA-COMP:12144"/>
        <dbReference type="ChEBI" id="CHEBI:57856"/>
        <dbReference type="ChEBI" id="CHEBI:59789"/>
        <dbReference type="ChEBI" id="CHEBI:90596"/>
        <dbReference type="ChEBI" id="CHEBI:90598"/>
        <dbReference type="EC" id="2.1.1.77"/>
    </reaction>
</comment>
<comment type="subcellular location">
    <subcellularLocation>
        <location evidence="1">Cytoplasm</location>
    </subcellularLocation>
</comment>
<comment type="similarity">
    <text evidence="1">Belongs to the methyltransferase superfamily. L-isoaspartyl/D-aspartyl protein methyltransferase family.</text>
</comment>
<evidence type="ECO:0000255" key="1">
    <source>
        <dbReference type="HAMAP-Rule" id="MF_00090"/>
    </source>
</evidence>
<evidence type="ECO:0000256" key="2">
    <source>
        <dbReference type="SAM" id="MobiDB-lite"/>
    </source>
</evidence>
<proteinExistence type="inferred from homology"/>
<keyword id="KW-0963">Cytoplasm</keyword>
<keyword id="KW-0489">Methyltransferase</keyword>
<keyword id="KW-1185">Reference proteome</keyword>
<keyword id="KW-0949">S-adenosyl-L-methionine</keyword>
<keyword id="KW-0808">Transferase</keyword>
<organism>
    <name type="scientific">Burkholderia pseudomallei (strain K96243)</name>
    <dbReference type="NCBI Taxonomy" id="272560"/>
    <lineage>
        <taxon>Bacteria</taxon>
        <taxon>Pseudomonadati</taxon>
        <taxon>Pseudomonadota</taxon>
        <taxon>Betaproteobacteria</taxon>
        <taxon>Burkholderiales</taxon>
        <taxon>Burkholderiaceae</taxon>
        <taxon>Burkholderia</taxon>
        <taxon>pseudomallei group</taxon>
    </lineage>
</organism>
<name>PIMT_BURPS</name>
<gene>
    <name evidence="1" type="primary">pcm</name>
    <name type="ordered locus">BPSL1503</name>
</gene>
<reference key="1">
    <citation type="journal article" date="2004" name="Proc. Natl. Acad. Sci. U.S.A.">
        <title>Genomic plasticity of the causative agent of melioidosis, Burkholderia pseudomallei.</title>
        <authorList>
            <person name="Holden M.T.G."/>
            <person name="Titball R.W."/>
            <person name="Peacock S.J."/>
            <person name="Cerdeno-Tarraga A.-M."/>
            <person name="Atkins T."/>
            <person name="Crossman L.C."/>
            <person name="Pitt T."/>
            <person name="Churcher C."/>
            <person name="Mungall K.L."/>
            <person name="Bentley S.D."/>
            <person name="Sebaihia M."/>
            <person name="Thomson N.R."/>
            <person name="Bason N."/>
            <person name="Beacham I.R."/>
            <person name="Brooks K."/>
            <person name="Brown K.A."/>
            <person name="Brown N.F."/>
            <person name="Challis G.L."/>
            <person name="Cherevach I."/>
            <person name="Chillingworth T."/>
            <person name="Cronin A."/>
            <person name="Crossett B."/>
            <person name="Davis P."/>
            <person name="DeShazer D."/>
            <person name="Feltwell T."/>
            <person name="Fraser A."/>
            <person name="Hance Z."/>
            <person name="Hauser H."/>
            <person name="Holroyd S."/>
            <person name="Jagels K."/>
            <person name="Keith K.E."/>
            <person name="Maddison M."/>
            <person name="Moule S."/>
            <person name="Price C."/>
            <person name="Quail M.A."/>
            <person name="Rabbinowitsch E."/>
            <person name="Rutherford K."/>
            <person name="Sanders M."/>
            <person name="Simmonds M."/>
            <person name="Songsivilai S."/>
            <person name="Stevens K."/>
            <person name="Tumapa S."/>
            <person name="Vesaratchavest M."/>
            <person name="Whitehead S."/>
            <person name="Yeats C."/>
            <person name="Barrell B.G."/>
            <person name="Oyston P.C.F."/>
            <person name="Parkhill J."/>
        </authorList>
    </citation>
    <scope>NUCLEOTIDE SEQUENCE [LARGE SCALE GENOMIC DNA]</scope>
    <source>
        <strain>K96243</strain>
    </source>
</reference>
<sequence>MSGERAKRFPLALEDLKREPRKPEGRVAERQAAGDAARQRLTAAAAVPAAASPIVPERRAPHGGVFAAKPARAKQHAPAAPGAAKRAPQGGAKQGDRSAAPNVALSGALALTSERVRERMVERLRANGVADPRVLAAMSAVPRHMFVDPGLAAQAYEDAALPIGHQQTISKPSVVARMIELAAAGRALERVLEIGTGCGYQAAVLSRVARDVYSIERVKPLYERAKLNLRPLRVPNIRLHYGDGRVGLPAAAPFDAIVIAAAGLDVPRALLEQLAIGGRLVAPVGEQAGEQVLTLVERVAPAQWRESRLDRVFFVPLKSGVI</sequence>
<protein>
    <recommendedName>
        <fullName evidence="1">Protein-L-isoaspartate O-methyltransferase</fullName>
        <ecNumber evidence="1">2.1.1.77</ecNumber>
    </recommendedName>
    <alternativeName>
        <fullName evidence="1">L-isoaspartyl protein carboxyl methyltransferase</fullName>
    </alternativeName>
    <alternativeName>
        <fullName evidence="1">Protein L-isoaspartyl methyltransferase</fullName>
    </alternativeName>
    <alternativeName>
        <fullName evidence="1">Protein-beta-aspartate methyltransferase</fullName>
        <shortName evidence="1">PIMT</shortName>
    </alternativeName>
</protein>